<evidence type="ECO:0000255" key="1">
    <source>
        <dbReference type="HAMAP-Rule" id="MF_01279"/>
    </source>
</evidence>
<feature type="chain" id="PRO_0000303864" description="Xaa-Pro dipeptidase">
    <location>
        <begin position="1"/>
        <end position="439"/>
    </location>
</feature>
<feature type="binding site" evidence="1">
    <location>
        <position position="244"/>
    </location>
    <ligand>
        <name>Mn(2+)</name>
        <dbReference type="ChEBI" id="CHEBI:29035"/>
        <label>2</label>
    </ligand>
</feature>
<feature type="binding site" evidence="1">
    <location>
        <position position="255"/>
    </location>
    <ligand>
        <name>Mn(2+)</name>
        <dbReference type="ChEBI" id="CHEBI:29035"/>
        <label>1</label>
    </ligand>
</feature>
<feature type="binding site" evidence="1">
    <location>
        <position position="255"/>
    </location>
    <ligand>
        <name>Mn(2+)</name>
        <dbReference type="ChEBI" id="CHEBI:29035"/>
        <label>2</label>
    </ligand>
</feature>
<feature type="binding site" evidence="1">
    <location>
        <position position="335"/>
    </location>
    <ligand>
        <name>Mn(2+)</name>
        <dbReference type="ChEBI" id="CHEBI:29035"/>
        <label>1</label>
    </ligand>
</feature>
<feature type="binding site" evidence="1">
    <location>
        <position position="380"/>
    </location>
    <ligand>
        <name>Mn(2+)</name>
        <dbReference type="ChEBI" id="CHEBI:29035"/>
        <label>1</label>
    </ligand>
</feature>
<feature type="binding site" evidence="1">
    <location>
        <position position="419"/>
    </location>
    <ligand>
        <name>Mn(2+)</name>
        <dbReference type="ChEBI" id="CHEBI:29035"/>
        <label>1</label>
    </ligand>
</feature>
<feature type="binding site" evidence="1">
    <location>
        <position position="419"/>
    </location>
    <ligand>
        <name>Mn(2+)</name>
        <dbReference type="ChEBI" id="CHEBI:29035"/>
        <label>2</label>
    </ligand>
</feature>
<name>PEPQ_SHESR</name>
<comment type="function">
    <text evidence="1">Splits dipeptides with a prolyl residue in the C-terminal position.</text>
</comment>
<comment type="catalytic activity">
    <reaction evidence="1">
        <text>Xaa-L-Pro dipeptide + H2O = an L-alpha-amino acid + L-proline</text>
        <dbReference type="Rhea" id="RHEA:76407"/>
        <dbReference type="ChEBI" id="CHEBI:15377"/>
        <dbReference type="ChEBI" id="CHEBI:59869"/>
        <dbReference type="ChEBI" id="CHEBI:60039"/>
        <dbReference type="ChEBI" id="CHEBI:195196"/>
        <dbReference type="EC" id="3.4.13.9"/>
    </reaction>
</comment>
<comment type="cofactor">
    <cofactor evidence="1">
        <name>Mn(2+)</name>
        <dbReference type="ChEBI" id="CHEBI:29035"/>
    </cofactor>
    <text evidence="1">Binds 2 manganese ions per subunit.</text>
</comment>
<comment type="similarity">
    <text evidence="1">Belongs to the peptidase M24B family. Bacterial-type prolidase subfamily.</text>
</comment>
<reference key="1">
    <citation type="submission" date="2006-08" db="EMBL/GenBank/DDBJ databases">
        <title>Complete sequence of chromosome 1 of Shewanella sp. MR-7.</title>
        <authorList>
            <person name="Copeland A."/>
            <person name="Lucas S."/>
            <person name="Lapidus A."/>
            <person name="Barry K."/>
            <person name="Detter J.C."/>
            <person name="Glavina del Rio T."/>
            <person name="Hammon N."/>
            <person name="Israni S."/>
            <person name="Dalin E."/>
            <person name="Tice H."/>
            <person name="Pitluck S."/>
            <person name="Kiss H."/>
            <person name="Brettin T."/>
            <person name="Bruce D."/>
            <person name="Han C."/>
            <person name="Tapia R."/>
            <person name="Gilna P."/>
            <person name="Schmutz J."/>
            <person name="Larimer F."/>
            <person name="Land M."/>
            <person name="Hauser L."/>
            <person name="Kyrpides N."/>
            <person name="Mikhailova N."/>
            <person name="Nealson K."/>
            <person name="Konstantinidis K."/>
            <person name="Klappenbach J."/>
            <person name="Tiedje J."/>
            <person name="Richardson P."/>
        </authorList>
    </citation>
    <scope>NUCLEOTIDE SEQUENCE [LARGE SCALE GENOMIC DNA]</scope>
    <source>
        <strain>MR-7</strain>
    </source>
</reference>
<gene>
    <name evidence="1" type="primary">pepQ</name>
    <name type="ordered locus">Shewmr7_0017</name>
</gene>
<keyword id="KW-0224">Dipeptidase</keyword>
<keyword id="KW-0378">Hydrolase</keyword>
<keyword id="KW-0464">Manganese</keyword>
<keyword id="KW-0479">Metal-binding</keyword>
<keyword id="KW-0482">Metalloprotease</keyword>
<keyword id="KW-0645">Protease</keyword>
<protein>
    <recommendedName>
        <fullName evidence="1">Xaa-Pro dipeptidase</fullName>
        <shortName evidence="1">X-Pro dipeptidase</shortName>
        <ecNumber evidence="1">3.4.13.9</ecNumber>
    </recommendedName>
    <alternativeName>
        <fullName evidence="1">Imidodipeptidase</fullName>
    </alternativeName>
    <alternativeName>
        <fullName evidence="1">Proline dipeptidase</fullName>
        <shortName evidence="1">Prolidase</shortName>
    </alternativeName>
</protein>
<dbReference type="EC" id="3.4.13.9" evidence="1"/>
<dbReference type="EMBL" id="CP000444">
    <property type="protein sequence ID" value="ABI41023.1"/>
    <property type="molecule type" value="Genomic_DNA"/>
</dbReference>
<dbReference type="SMR" id="Q0I0T2"/>
<dbReference type="MEROPS" id="M24.003"/>
<dbReference type="KEGG" id="shm:Shewmr7_0017"/>
<dbReference type="HOGENOM" id="CLU_050675_0_0_6"/>
<dbReference type="GO" id="GO:0005829">
    <property type="term" value="C:cytosol"/>
    <property type="evidence" value="ECO:0007669"/>
    <property type="project" value="TreeGrafter"/>
</dbReference>
<dbReference type="GO" id="GO:0004177">
    <property type="term" value="F:aminopeptidase activity"/>
    <property type="evidence" value="ECO:0007669"/>
    <property type="project" value="TreeGrafter"/>
</dbReference>
<dbReference type="GO" id="GO:0046872">
    <property type="term" value="F:metal ion binding"/>
    <property type="evidence" value="ECO:0007669"/>
    <property type="project" value="UniProtKB-KW"/>
</dbReference>
<dbReference type="GO" id="GO:0008235">
    <property type="term" value="F:metalloexopeptidase activity"/>
    <property type="evidence" value="ECO:0007669"/>
    <property type="project" value="UniProtKB-UniRule"/>
</dbReference>
<dbReference type="GO" id="GO:0016795">
    <property type="term" value="F:phosphoric triester hydrolase activity"/>
    <property type="evidence" value="ECO:0007669"/>
    <property type="project" value="InterPro"/>
</dbReference>
<dbReference type="GO" id="GO:0102009">
    <property type="term" value="F:proline dipeptidase activity"/>
    <property type="evidence" value="ECO:0007669"/>
    <property type="project" value="UniProtKB-EC"/>
</dbReference>
<dbReference type="GO" id="GO:0006508">
    <property type="term" value="P:proteolysis"/>
    <property type="evidence" value="ECO:0007669"/>
    <property type="project" value="UniProtKB-KW"/>
</dbReference>
<dbReference type="CDD" id="cd01087">
    <property type="entry name" value="Prolidase"/>
    <property type="match status" value="1"/>
</dbReference>
<dbReference type="Gene3D" id="3.90.230.10">
    <property type="entry name" value="Creatinase/methionine aminopeptidase superfamily"/>
    <property type="match status" value="1"/>
</dbReference>
<dbReference type="Gene3D" id="3.40.350.10">
    <property type="entry name" value="Creatinase/prolidase N-terminal domain"/>
    <property type="match status" value="1"/>
</dbReference>
<dbReference type="HAMAP" id="MF_01279">
    <property type="entry name" value="X_Pro_dipeptid"/>
    <property type="match status" value="1"/>
</dbReference>
<dbReference type="InterPro" id="IPR029149">
    <property type="entry name" value="Creatin/AminoP/Spt16_N"/>
</dbReference>
<dbReference type="InterPro" id="IPR036005">
    <property type="entry name" value="Creatinase/aminopeptidase-like"/>
</dbReference>
<dbReference type="InterPro" id="IPR048819">
    <property type="entry name" value="PepQ_N"/>
</dbReference>
<dbReference type="InterPro" id="IPR000994">
    <property type="entry name" value="Pept_M24"/>
</dbReference>
<dbReference type="InterPro" id="IPR001131">
    <property type="entry name" value="Peptidase_M24B_aminopep-P_CS"/>
</dbReference>
<dbReference type="InterPro" id="IPR052433">
    <property type="entry name" value="X-Pro_dipept-like"/>
</dbReference>
<dbReference type="InterPro" id="IPR022846">
    <property type="entry name" value="X_Pro_dipept"/>
</dbReference>
<dbReference type="NCBIfam" id="NF010133">
    <property type="entry name" value="PRK13607.1"/>
    <property type="match status" value="1"/>
</dbReference>
<dbReference type="PANTHER" id="PTHR43226">
    <property type="entry name" value="XAA-PRO AMINOPEPTIDASE 3"/>
    <property type="match status" value="1"/>
</dbReference>
<dbReference type="PANTHER" id="PTHR43226:SF8">
    <property type="entry name" value="XAA-PRO DIPEPTIDASE"/>
    <property type="match status" value="1"/>
</dbReference>
<dbReference type="Pfam" id="PF21216">
    <property type="entry name" value="PepQ_N"/>
    <property type="match status" value="1"/>
</dbReference>
<dbReference type="Pfam" id="PF00557">
    <property type="entry name" value="Peptidase_M24"/>
    <property type="match status" value="1"/>
</dbReference>
<dbReference type="SUPFAM" id="SSF55920">
    <property type="entry name" value="Creatinase/aminopeptidase"/>
    <property type="match status" value="1"/>
</dbReference>
<dbReference type="SUPFAM" id="SSF53092">
    <property type="entry name" value="Creatinase/prolidase N-terminal domain"/>
    <property type="match status" value="1"/>
</dbReference>
<dbReference type="PROSITE" id="PS00491">
    <property type="entry name" value="PROLINE_PEPTIDASE"/>
    <property type="match status" value="1"/>
</dbReference>
<sequence length="439" mass="49970">MDHLAHHYHAHIAELNRRVAEIVSREALSGLVIHSGQPHRMFLDDINYPFKANPHFKAWLPVLDNPNCWLVVNGRDKPQLIFYRPVDFWHKVSDVPEMFWTEHFEIKLLTKADKVAELLPSDITNWAYLGEHLDVAEVLGFTSRNPDSVMSYLHFHRTTKTEYELECMRRANQIAVQGHLAAKNAFYNGASEFEIQQQYLSAVGQGDNEVPYGNIIALNQNAAILHYTALEHQNPARRLSFLIDAGASYFGYASDITRTYAFEKNRFDELITAMNKAQLELIDMMRPGVRYPDLHLATHGKVAQMLLDFELATGDAQGLVDQGITSAFFPHGLGHMLGLQVHDVGGFSFDERGTHIPAPEAHPFLRCTRILAPNQVLTMEPGLYIIDTLLNELKQDSRGQQINWRTVDELRPFGGIRIEDNVIVHQDRNENMTRELGLA</sequence>
<proteinExistence type="inferred from homology"/>
<organism>
    <name type="scientific">Shewanella sp. (strain MR-7)</name>
    <dbReference type="NCBI Taxonomy" id="60481"/>
    <lineage>
        <taxon>Bacteria</taxon>
        <taxon>Pseudomonadati</taxon>
        <taxon>Pseudomonadota</taxon>
        <taxon>Gammaproteobacteria</taxon>
        <taxon>Alteromonadales</taxon>
        <taxon>Shewanellaceae</taxon>
        <taxon>Shewanella</taxon>
    </lineage>
</organism>
<accession>Q0I0T2</accession>